<accession>A5IQ73</accession>
<comment type="function">
    <text evidence="1">Catalyzes the hydrolysis of glutamine to glutamate and ammonia as part of the biosynthesis of pyridoxal 5'-phosphate. The resulting ammonia molecule is channeled to the active site of PdxS.</text>
</comment>
<comment type="catalytic activity">
    <reaction evidence="1">
        <text>aldehydo-D-ribose 5-phosphate + D-glyceraldehyde 3-phosphate + L-glutamine = pyridoxal 5'-phosphate + L-glutamate + phosphate + 3 H2O + H(+)</text>
        <dbReference type="Rhea" id="RHEA:31507"/>
        <dbReference type="ChEBI" id="CHEBI:15377"/>
        <dbReference type="ChEBI" id="CHEBI:15378"/>
        <dbReference type="ChEBI" id="CHEBI:29985"/>
        <dbReference type="ChEBI" id="CHEBI:43474"/>
        <dbReference type="ChEBI" id="CHEBI:58273"/>
        <dbReference type="ChEBI" id="CHEBI:58359"/>
        <dbReference type="ChEBI" id="CHEBI:59776"/>
        <dbReference type="ChEBI" id="CHEBI:597326"/>
        <dbReference type="EC" id="4.3.3.6"/>
    </reaction>
</comment>
<comment type="catalytic activity">
    <reaction evidence="1">
        <text>L-glutamine + H2O = L-glutamate + NH4(+)</text>
        <dbReference type="Rhea" id="RHEA:15889"/>
        <dbReference type="ChEBI" id="CHEBI:15377"/>
        <dbReference type="ChEBI" id="CHEBI:28938"/>
        <dbReference type="ChEBI" id="CHEBI:29985"/>
        <dbReference type="ChEBI" id="CHEBI:58359"/>
        <dbReference type="EC" id="3.5.1.2"/>
    </reaction>
</comment>
<comment type="pathway">
    <text evidence="1">Cofactor biosynthesis; pyridoxal 5'-phosphate biosynthesis.</text>
</comment>
<comment type="subunit">
    <text evidence="1">In the presence of PdxS, forms a dodecamer of heterodimers. Only shows activity in the heterodimer.</text>
</comment>
<comment type="similarity">
    <text evidence="1">Belongs to the glutaminase PdxT/SNO family.</text>
</comment>
<reference key="1">
    <citation type="submission" date="2007-05" db="EMBL/GenBank/DDBJ databases">
        <title>Complete sequence of chromosome of Staphylococcus aureus subsp. aureus JH9.</title>
        <authorList>
            <consortium name="US DOE Joint Genome Institute"/>
            <person name="Copeland A."/>
            <person name="Lucas S."/>
            <person name="Lapidus A."/>
            <person name="Barry K."/>
            <person name="Detter J.C."/>
            <person name="Glavina del Rio T."/>
            <person name="Hammon N."/>
            <person name="Israni S."/>
            <person name="Pitluck S."/>
            <person name="Chain P."/>
            <person name="Malfatti S."/>
            <person name="Shin M."/>
            <person name="Vergez L."/>
            <person name="Schmutz J."/>
            <person name="Larimer F."/>
            <person name="Land M."/>
            <person name="Hauser L."/>
            <person name="Kyrpides N."/>
            <person name="Kim E."/>
            <person name="Tomasz A."/>
            <person name="Richardson P."/>
        </authorList>
    </citation>
    <scope>NUCLEOTIDE SEQUENCE [LARGE SCALE GENOMIC DNA]</scope>
    <source>
        <strain>JH9</strain>
    </source>
</reference>
<evidence type="ECO:0000255" key="1">
    <source>
        <dbReference type="HAMAP-Rule" id="MF_01615"/>
    </source>
</evidence>
<dbReference type="EC" id="4.3.3.6" evidence="1"/>
<dbReference type="EC" id="3.5.1.2" evidence="1"/>
<dbReference type="EMBL" id="CP000703">
    <property type="protein sequence ID" value="ABQ48346.1"/>
    <property type="molecule type" value="Genomic_DNA"/>
</dbReference>
<dbReference type="RefSeq" id="WP_000690439.1">
    <property type="nucleotide sequence ID" value="NC_009487.1"/>
</dbReference>
<dbReference type="SMR" id="A5IQ73"/>
<dbReference type="MEROPS" id="C26.A32"/>
<dbReference type="KEGG" id="saj:SaurJH9_0542"/>
<dbReference type="HOGENOM" id="CLU_069674_2_0_9"/>
<dbReference type="UniPathway" id="UPA00245"/>
<dbReference type="GO" id="GO:0005829">
    <property type="term" value="C:cytosol"/>
    <property type="evidence" value="ECO:0007669"/>
    <property type="project" value="TreeGrafter"/>
</dbReference>
<dbReference type="GO" id="GO:1903600">
    <property type="term" value="C:glutaminase complex"/>
    <property type="evidence" value="ECO:0007669"/>
    <property type="project" value="TreeGrafter"/>
</dbReference>
<dbReference type="GO" id="GO:0004359">
    <property type="term" value="F:glutaminase activity"/>
    <property type="evidence" value="ECO:0007669"/>
    <property type="project" value="UniProtKB-UniRule"/>
</dbReference>
<dbReference type="GO" id="GO:0036381">
    <property type="term" value="F:pyridoxal 5'-phosphate synthase (glutamine hydrolysing) activity"/>
    <property type="evidence" value="ECO:0007669"/>
    <property type="project" value="UniProtKB-UniRule"/>
</dbReference>
<dbReference type="GO" id="GO:0006543">
    <property type="term" value="P:glutamine catabolic process"/>
    <property type="evidence" value="ECO:0007669"/>
    <property type="project" value="UniProtKB-UniRule"/>
</dbReference>
<dbReference type="GO" id="GO:0042823">
    <property type="term" value="P:pyridoxal phosphate biosynthetic process"/>
    <property type="evidence" value="ECO:0007669"/>
    <property type="project" value="UniProtKB-UniRule"/>
</dbReference>
<dbReference type="GO" id="GO:0008614">
    <property type="term" value="P:pyridoxine metabolic process"/>
    <property type="evidence" value="ECO:0007669"/>
    <property type="project" value="TreeGrafter"/>
</dbReference>
<dbReference type="CDD" id="cd01749">
    <property type="entry name" value="GATase1_PB"/>
    <property type="match status" value="1"/>
</dbReference>
<dbReference type="FunFam" id="3.40.50.880:FF:000010">
    <property type="entry name" value="uncharacterized protein LOC100176842 isoform X2"/>
    <property type="match status" value="1"/>
</dbReference>
<dbReference type="Gene3D" id="3.40.50.880">
    <property type="match status" value="1"/>
</dbReference>
<dbReference type="HAMAP" id="MF_01615">
    <property type="entry name" value="PdxT"/>
    <property type="match status" value="1"/>
</dbReference>
<dbReference type="InterPro" id="IPR029062">
    <property type="entry name" value="Class_I_gatase-like"/>
</dbReference>
<dbReference type="InterPro" id="IPR002161">
    <property type="entry name" value="PdxT/SNO"/>
</dbReference>
<dbReference type="InterPro" id="IPR021196">
    <property type="entry name" value="PdxT/SNO_CS"/>
</dbReference>
<dbReference type="NCBIfam" id="TIGR03800">
    <property type="entry name" value="PLP_synth_Pdx2"/>
    <property type="match status" value="1"/>
</dbReference>
<dbReference type="PANTHER" id="PTHR31559">
    <property type="entry name" value="PYRIDOXAL 5'-PHOSPHATE SYNTHASE SUBUNIT SNO"/>
    <property type="match status" value="1"/>
</dbReference>
<dbReference type="PANTHER" id="PTHR31559:SF0">
    <property type="entry name" value="PYRIDOXAL 5'-PHOSPHATE SYNTHASE SUBUNIT SNO1-RELATED"/>
    <property type="match status" value="1"/>
</dbReference>
<dbReference type="Pfam" id="PF01174">
    <property type="entry name" value="SNO"/>
    <property type="match status" value="1"/>
</dbReference>
<dbReference type="PIRSF" id="PIRSF005639">
    <property type="entry name" value="Glut_amidoT_SNO"/>
    <property type="match status" value="1"/>
</dbReference>
<dbReference type="SUPFAM" id="SSF52317">
    <property type="entry name" value="Class I glutamine amidotransferase-like"/>
    <property type="match status" value="1"/>
</dbReference>
<dbReference type="PROSITE" id="PS01236">
    <property type="entry name" value="PDXT_SNO_1"/>
    <property type="match status" value="1"/>
</dbReference>
<dbReference type="PROSITE" id="PS51130">
    <property type="entry name" value="PDXT_SNO_2"/>
    <property type="match status" value="1"/>
</dbReference>
<keyword id="KW-0315">Glutamine amidotransferase</keyword>
<keyword id="KW-0378">Hydrolase</keyword>
<keyword id="KW-0456">Lyase</keyword>
<keyword id="KW-0663">Pyridoxal phosphate</keyword>
<gene>
    <name evidence="1" type="primary">pdxT</name>
    <name type="ordered locus">SaurJH9_0542</name>
</gene>
<sequence length="186" mass="20630">MKIGVLALQGAVREHIRHIELSGHEGIAVKKVEQLEEIEGLILPGGESTTLRRLMNLYGFKEALQNSTLPMFGTCAGLIVLAQDIVGEEGYLNKLNITVQRNSFGRQVDSFETELDIKGIATDIEGVFIRAPHIEKVGQGVDILCKVNEKIVAVQQGKYLGVSFHPELTDDYRVTDYFINHIVKKA</sequence>
<organism>
    <name type="scientific">Staphylococcus aureus (strain JH9)</name>
    <dbReference type="NCBI Taxonomy" id="359786"/>
    <lineage>
        <taxon>Bacteria</taxon>
        <taxon>Bacillati</taxon>
        <taxon>Bacillota</taxon>
        <taxon>Bacilli</taxon>
        <taxon>Bacillales</taxon>
        <taxon>Staphylococcaceae</taxon>
        <taxon>Staphylococcus</taxon>
    </lineage>
</organism>
<name>PDXT_STAA9</name>
<protein>
    <recommendedName>
        <fullName evidence="1">Pyridoxal 5'-phosphate synthase subunit PdxT</fullName>
        <ecNumber evidence="1">4.3.3.6</ecNumber>
    </recommendedName>
    <alternativeName>
        <fullName evidence="1">Pdx2</fullName>
    </alternativeName>
    <alternativeName>
        <fullName evidence="1">Pyridoxal 5'-phosphate synthase glutaminase subunit</fullName>
        <ecNumber evidence="1">3.5.1.2</ecNumber>
    </alternativeName>
</protein>
<proteinExistence type="inferred from homology"/>
<feature type="chain" id="PRO_1000088058" description="Pyridoxal 5'-phosphate synthase subunit PdxT">
    <location>
        <begin position="1"/>
        <end position="186"/>
    </location>
</feature>
<feature type="active site" description="Nucleophile" evidence="1">
    <location>
        <position position="75"/>
    </location>
</feature>
<feature type="active site" description="Charge relay system" evidence="1">
    <location>
        <position position="165"/>
    </location>
</feature>
<feature type="active site" description="Charge relay system" evidence="1">
    <location>
        <position position="167"/>
    </location>
</feature>
<feature type="binding site" evidence="1">
    <location>
        <begin position="46"/>
        <end position="48"/>
    </location>
    <ligand>
        <name>L-glutamine</name>
        <dbReference type="ChEBI" id="CHEBI:58359"/>
    </ligand>
</feature>
<feature type="binding site" evidence="1">
    <location>
        <position position="101"/>
    </location>
    <ligand>
        <name>L-glutamine</name>
        <dbReference type="ChEBI" id="CHEBI:58359"/>
    </ligand>
</feature>
<feature type="binding site" evidence="1">
    <location>
        <begin position="129"/>
        <end position="130"/>
    </location>
    <ligand>
        <name>L-glutamine</name>
        <dbReference type="ChEBI" id="CHEBI:58359"/>
    </ligand>
</feature>